<accession>Q9LZB8</accession>
<accession>Q56WM5</accession>
<accession>Q9FFM7</accession>
<sequence>MSFLLLTPPPCLLIPPPPLSHRRSSSLFLKHPFQPSPRPLSFCKPSALRLRANTTVNSLKALETIKPYLQSESKTVLLGWLCSCVSVVSLSQIVPRLGSFTSNLNANAASLTKLKGECLVLAGLVLAKVVAYYLQQAFLWEAALNTVYKIRVFAYRRVLERELEFFEGGNGISSGDIAYRITAEASEVADTIYALLNTVVPSAIQISVMTAHMIVASPALTLVSAMVIPSVALLIAYLGDRLRKISRKAQIASAQLSTYLNEVLPAILFVKANNAEISESVRFQRFARADLDERFKKKKMKSLIPQIVQVMYLGSLSIFCVGAVILAGSSLSSSAIVSFVASLAFLIDPVQDLGKAYNELKQGEPAIERLFDLTSLESKVIERPEAIQLEKVAGEVELCDISFKYDENMLPVLDGLNLHIKAGETVALVGPSGGGKTTLIKLLLRLYEPSSGSIIIDKIDIKDIKLESLRKHVGLVSQDTTLFSGTIADNIGYRDLTTGIDMKRVELAAKTANADEFIRNLPEGYNTGVGPRGSSLSGGQKQRLAIARALYQKSSILILDEATSALDSLSELLVREALERVMQDHTVIVIAHRLETVMMAQRVFLVERGKLKELNRSSLLSTHKDSLTSAGLVI</sequence>
<gene>
    <name type="primary">ABCB29</name>
    <name type="synonym">ATH12</name>
    <name type="ordered locus">At5g03910</name>
    <name type="ORF">F8F6.120</name>
</gene>
<name>AB29B_ARATH</name>
<feature type="transit peptide" description="Chloroplast" evidence="1">
    <location>
        <begin position="1"/>
        <end position="51"/>
    </location>
</feature>
<feature type="chain" id="PRO_0000240331" description="ABC transporter B family member 29, chloroplastic">
    <location>
        <begin position="52"/>
        <end position="634"/>
    </location>
</feature>
<feature type="transmembrane region" description="Helical" evidence="3">
    <location>
        <begin position="75"/>
        <end position="95"/>
    </location>
</feature>
<feature type="transmembrane region" description="Helical" evidence="3">
    <location>
        <begin position="119"/>
        <end position="139"/>
    </location>
</feature>
<feature type="transmembrane region" description="Helical" evidence="3">
    <location>
        <begin position="195"/>
        <end position="215"/>
    </location>
</feature>
<feature type="transmembrane region" description="Helical" evidence="3">
    <location>
        <begin position="219"/>
        <end position="239"/>
    </location>
</feature>
<feature type="transmembrane region" description="Helical" evidence="3">
    <location>
        <begin position="307"/>
        <end position="327"/>
    </location>
</feature>
<feature type="transmembrane region" description="Helical" evidence="3">
    <location>
        <begin position="330"/>
        <end position="350"/>
    </location>
</feature>
<feature type="domain" description="ABC transmembrane type-1" evidence="3">
    <location>
        <begin position="77"/>
        <end position="362"/>
    </location>
</feature>
<feature type="domain" description="ABC transporter" evidence="2">
    <location>
        <begin position="396"/>
        <end position="633"/>
    </location>
</feature>
<feature type="binding site" evidence="2">
    <location>
        <begin position="430"/>
        <end position="437"/>
    </location>
    <ligand>
        <name>ATP</name>
        <dbReference type="ChEBI" id="CHEBI:30616"/>
    </ligand>
</feature>
<organism>
    <name type="scientific">Arabidopsis thaliana</name>
    <name type="common">Mouse-ear cress</name>
    <dbReference type="NCBI Taxonomy" id="3702"/>
    <lineage>
        <taxon>Eukaryota</taxon>
        <taxon>Viridiplantae</taxon>
        <taxon>Streptophyta</taxon>
        <taxon>Embryophyta</taxon>
        <taxon>Tracheophyta</taxon>
        <taxon>Spermatophyta</taxon>
        <taxon>Magnoliopsida</taxon>
        <taxon>eudicotyledons</taxon>
        <taxon>Gunneridae</taxon>
        <taxon>Pentapetalae</taxon>
        <taxon>rosids</taxon>
        <taxon>malvids</taxon>
        <taxon>Brassicales</taxon>
        <taxon>Brassicaceae</taxon>
        <taxon>Camelineae</taxon>
        <taxon>Arabidopsis</taxon>
    </lineage>
</organism>
<proteinExistence type="evidence at protein level"/>
<comment type="subcellular location">
    <subcellularLocation>
        <location evidence="4">Plastid</location>
        <location evidence="4">Chloroplast membrane</location>
        <topology evidence="3 4">Multi-pass membrane protein</topology>
    </subcellularLocation>
</comment>
<comment type="similarity">
    <text evidence="5">Belongs to the ABC transporter superfamily. ABCB family. Multidrug resistance exporter (TC 3.A.1.201) subfamily.</text>
</comment>
<keyword id="KW-0067">ATP-binding</keyword>
<keyword id="KW-0150">Chloroplast</keyword>
<keyword id="KW-0472">Membrane</keyword>
<keyword id="KW-0547">Nucleotide-binding</keyword>
<keyword id="KW-0934">Plastid</keyword>
<keyword id="KW-1185">Reference proteome</keyword>
<keyword id="KW-0809">Transit peptide</keyword>
<keyword id="KW-0812">Transmembrane</keyword>
<keyword id="KW-1133">Transmembrane helix</keyword>
<keyword id="KW-0813">Transport</keyword>
<evidence type="ECO:0000255" key="1"/>
<evidence type="ECO:0000255" key="2">
    <source>
        <dbReference type="PROSITE-ProRule" id="PRU00434"/>
    </source>
</evidence>
<evidence type="ECO:0000255" key="3">
    <source>
        <dbReference type="PROSITE-ProRule" id="PRU00441"/>
    </source>
</evidence>
<evidence type="ECO:0000269" key="4">
    <source>
    </source>
</evidence>
<evidence type="ECO:0000305" key="5"/>
<protein>
    <recommendedName>
        <fullName>ABC transporter B family member 29, chloroplastic</fullName>
        <shortName>ABC transporter ABCB.29</shortName>
        <shortName>AtABCB29</shortName>
    </recommendedName>
    <alternativeName>
        <fullName>ABC2 homolog 12</fullName>
    </alternativeName>
</protein>
<dbReference type="EMBL" id="AL162873">
    <property type="protein sequence ID" value="CAB85511.1"/>
    <property type="molecule type" value="Genomic_DNA"/>
</dbReference>
<dbReference type="EMBL" id="AB005235">
    <property type="protein sequence ID" value="BAB17024.1"/>
    <property type="molecule type" value="Genomic_DNA"/>
</dbReference>
<dbReference type="EMBL" id="CP002688">
    <property type="protein sequence ID" value="AED90671.1"/>
    <property type="molecule type" value="Genomic_DNA"/>
</dbReference>
<dbReference type="EMBL" id="AY059727">
    <property type="protein sequence ID" value="AAL24084.1"/>
    <property type="molecule type" value="mRNA"/>
</dbReference>
<dbReference type="EMBL" id="AY091365">
    <property type="protein sequence ID" value="AAM14304.1"/>
    <property type="molecule type" value="mRNA"/>
</dbReference>
<dbReference type="EMBL" id="AK222011">
    <property type="protein sequence ID" value="BAD94656.1"/>
    <property type="molecule type" value="mRNA"/>
</dbReference>
<dbReference type="PIR" id="T48418">
    <property type="entry name" value="T48418"/>
</dbReference>
<dbReference type="RefSeq" id="NP_196011.1">
    <property type="nucleotide sequence ID" value="NM_120473.3"/>
</dbReference>
<dbReference type="SMR" id="Q9LZB8"/>
<dbReference type="BioGRID" id="15549">
    <property type="interactions" value="3"/>
</dbReference>
<dbReference type="FunCoup" id="Q9LZB8">
    <property type="interactions" value="1070"/>
</dbReference>
<dbReference type="IntAct" id="Q9LZB8">
    <property type="interactions" value="2"/>
</dbReference>
<dbReference type="STRING" id="3702.Q9LZB8"/>
<dbReference type="PaxDb" id="3702-AT5G03910.1"/>
<dbReference type="ProteomicsDB" id="244593"/>
<dbReference type="EnsemblPlants" id="AT5G03910.1">
    <property type="protein sequence ID" value="AT5G03910.1"/>
    <property type="gene ID" value="AT5G03910"/>
</dbReference>
<dbReference type="GeneID" id="830269"/>
<dbReference type="Gramene" id="AT5G03910.1">
    <property type="protein sequence ID" value="AT5G03910.1"/>
    <property type="gene ID" value="AT5G03910"/>
</dbReference>
<dbReference type="KEGG" id="ath:AT5G03910"/>
<dbReference type="Araport" id="AT5G03910"/>
<dbReference type="TAIR" id="AT5G03910">
    <property type="gene designation" value="ABCB29"/>
</dbReference>
<dbReference type="eggNOG" id="KOG0058">
    <property type="taxonomic scope" value="Eukaryota"/>
</dbReference>
<dbReference type="HOGENOM" id="CLU_000604_84_3_1"/>
<dbReference type="InParanoid" id="Q9LZB8"/>
<dbReference type="OMA" id="PLMNIIG"/>
<dbReference type="OrthoDB" id="6500128at2759"/>
<dbReference type="PhylomeDB" id="Q9LZB8"/>
<dbReference type="BioCyc" id="ARA:AT5G03910-MONOMER"/>
<dbReference type="PRO" id="PR:Q9LZB8"/>
<dbReference type="Proteomes" id="UP000006548">
    <property type="component" value="Chromosome 5"/>
</dbReference>
<dbReference type="ExpressionAtlas" id="Q9LZB8">
    <property type="expression patterns" value="baseline and differential"/>
</dbReference>
<dbReference type="GO" id="GO:0009507">
    <property type="term" value="C:chloroplast"/>
    <property type="evidence" value="ECO:0007005"/>
    <property type="project" value="TAIR"/>
</dbReference>
<dbReference type="GO" id="GO:0009941">
    <property type="term" value="C:chloroplast envelope"/>
    <property type="evidence" value="ECO:0007005"/>
    <property type="project" value="TAIR"/>
</dbReference>
<dbReference type="GO" id="GO:0031969">
    <property type="term" value="C:chloroplast membrane"/>
    <property type="evidence" value="ECO:0007669"/>
    <property type="project" value="UniProtKB-SubCell"/>
</dbReference>
<dbReference type="GO" id="GO:0005886">
    <property type="term" value="C:plasma membrane"/>
    <property type="evidence" value="ECO:0007005"/>
    <property type="project" value="TAIR"/>
</dbReference>
<dbReference type="GO" id="GO:0140359">
    <property type="term" value="F:ABC-type transporter activity"/>
    <property type="evidence" value="ECO:0007669"/>
    <property type="project" value="InterPro"/>
</dbReference>
<dbReference type="GO" id="GO:0005524">
    <property type="term" value="F:ATP binding"/>
    <property type="evidence" value="ECO:0007669"/>
    <property type="project" value="UniProtKB-KW"/>
</dbReference>
<dbReference type="GO" id="GO:0016887">
    <property type="term" value="F:ATP hydrolysis activity"/>
    <property type="evidence" value="ECO:0007669"/>
    <property type="project" value="InterPro"/>
</dbReference>
<dbReference type="CDD" id="cd07346">
    <property type="entry name" value="ABC_6TM_exporters"/>
    <property type="match status" value="1"/>
</dbReference>
<dbReference type="FunFam" id="3.40.50.300:FF:001371">
    <property type="entry name" value="ABC transporter ATP-binding protein"/>
    <property type="match status" value="1"/>
</dbReference>
<dbReference type="FunFam" id="1.20.1560.10:FF:000096">
    <property type="entry name" value="ABC transporter related"/>
    <property type="match status" value="1"/>
</dbReference>
<dbReference type="Gene3D" id="1.20.1560.10">
    <property type="entry name" value="ABC transporter type 1, transmembrane domain"/>
    <property type="match status" value="1"/>
</dbReference>
<dbReference type="Gene3D" id="3.40.50.300">
    <property type="entry name" value="P-loop containing nucleotide triphosphate hydrolases"/>
    <property type="match status" value="1"/>
</dbReference>
<dbReference type="InterPro" id="IPR003593">
    <property type="entry name" value="AAA+_ATPase"/>
</dbReference>
<dbReference type="InterPro" id="IPR011527">
    <property type="entry name" value="ABC1_TM_dom"/>
</dbReference>
<dbReference type="InterPro" id="IPR036640">
    <property type="entry name" value="ABC1_TM_sf"/>
</dbReference>
<dbReference type="InterPro" id="IPR003439">
    <property type="entry name" value="ABC_transporter-like_ATP-bd"/>
</dbReference>
<dbReference type="InterPro" id="IPR017871">
    <property type="entry name" value="ABC_transporter-like_CS"/>
</dbReference>
<dbReference type="InterPro" id="IPR027417">
    <property type="entry name" value="P-loop_NTPase"/>
</dbReference>
<dbReference type="InterPro" id="IPR039421">
    <property type="entry name" value="Type_1_exporter"/>
</dbReference>
<dbReference type="PANTHER" id="PTHR24221:SF630">
    <property type="entry name" value="ABC TRANSPORTER B FAMILY MEMBER 29, CHLOROPLASTIC"/>
    <property type="match status" value="1"/>
</dbReference>
<dbReference type="PANTHER" id="PTHR24221">
    <property type="entry name" value="ATP-BINDING CASSETTE SUB-FAMILY B"/>
    <property type="match status" value="1"/>
</dbReference>
<dbReference type="Pfam" id="PF00664">
    <property type="entry name" value="ABC_membrane"/>
    <property type="match status" value="1"/>
</dbReference>
<dbReference type="Pfam" id="PF00005">
    <property type="entry name" value="ABC_tran"/>
    <property type="match status" value="1"/>
</dbReference>
<dbReference type="SMART" id="SM00382">
    <property type="entry name" value="AAA"/>
    <property type="match status" value="1"/>
</dbReference>
<dbReference type="SUPFAM" id="SSF90123">
    <property type="entry name" value="ABC transporter transmembrane region"/>
    <property type="match status" value="1"/>
</dbReference>
<dbReference type="SUPFAM" id="SSF52540">
    <property type="entry name" value="P-loop containing nucleoside triphosphate hydrolases"/>
    <property type="match status" value="1"/>
</dbReference>
<dbReference type="PROSITE" id="PS50929">
    <property type="entry name" value="ABC_TM1F"/>
    <property type="match status" value="1"/>
</dbReference>
<dbReference type="PROSITE" id="PS00211">
    <property type="entry name" value="ABC_TRANSPORTER_1"/>
    <property type="match status" value="1"/>
</dbReference>
<dbReference type="PROSITE" id="PS50893">
    <property type="entry name" value="ABC_TRANSPORTER_2"/>
    <property type="match status" value="1"/>
</dbReference>
<reference key="1">
    <citation type="journal article" date="2000" name="Nature">
        <title>Sequence and analysis of chromosome 5 of the plant Arabidopsis thaliana.</title>
        <authorList>
            <person name="Tabata S."/>
            <person name="Kaneko T."/>
            <person name="Nakamura Y."/>
            <person name="Kotani H."/>
            <person name="Kato T."/>
            <person name="Asamizu E."/>
            <person name="Miyajima N."/>
            <person name="Sasamoto S."/>
            <person name="Kimura T."/>
            <person name="Hosouchi T."/>
            <person name="Kawashima K."/>
            <person name="Kohara M."/>
            <person name="Matsumoto M."/>
            <person name="Matsuno A."/>
            <person name="Muraki A."/>
            <person name="Nakayama S."/>
            <person name="Nakazaki N."/>
            <person name="Naruo K."/>
            <person name="Okumura S."/>
            <person name="Shinpo S."/>
            <person name="Takeuchi C."/>
            <person name="Wada T."/>
            <person name="Watanabe A."/>
            <person name="Yamada M."/>
            <person name="Yasuda M."/>
            <person name="Sato S."/>
            <person name="de la Bastide M."/>
            <person name="Huang E."/>
            <person name="Spiegel L."/>
            <person name="Gnoj L."/>
            <person name="O'Shaughnessy A."/>
            <person name="Preston R."/>
            <person name="Habermann K."/>
            <person name="Murray J."/>
            <person name="Johnson D."/>
            <person name="Rohlfing T."/>
            <person name="Nelson J."/>
            <person name="Stoneking T."/>
            <person name="Pepin K."/>
            <person name="Spieth J."/>
            <person name="Sekhon M."/>
            <person name="Armstrong J."/>
            <person name="Becker M."/>
            <person name="Belter E."/>
            <person name="Cordum H."/>
            <person name="Cordes M."/>
            <person name="Courtney L."/>
            <person name="Courtney W."/>
            <person name="Dante M."/>
            <person name="Du H."/>
            <person name="Edwards J."/>
            <person name="Fryman J."/>
            <person name="Haakensen B."/>
            <person name="Lamar E."/>
            <person name="Latreille P."/>
            <person name="Leonard S."/>
            <person name="Meyer R."/>
            <person name="Mulvaney E."/>
            <person name="Ozersky P."/>
            <person name="Riley A."/>
            <person name="Strowmatt C."/>
            <person name="Wagner-McPherson C."/>
            <person name="Wollam A."/>
            <person name="Yoakum M."/>
            <person name="Bell M."/>
            <person name="Dedhia N."/>
            <person name="Parnell L."/>
            <person name="Shah R."/>
            <person name="Rodriguez M."/>
            <person name="Hoon See L."/>
            <person name="Vil D."/>
            <person name="Baker J."/>
            <person name="Kirchoff K."/>
            <person name="Toth K."/>
            <person name="King L."/>
            <person name="Bahret A."/>
            <person name="Miller B."/>
            <person name="Marra M.A."/>
            <person name="Martienssen R."/>
            <person name="McCombie W.R."/>
            <person name="Wilson R.K."/>
            <person name="Murphy G."/>
            <person name="Bancroft I."/>
            <person name="Volckaert G."/>
            <person name="Wambutt R."/>
            <person name="Duesterhoeft A."/>
            <person name="Stiekema W."/>
            <person name="Pohl T."/>
            <person name="Entian K.-D."/>
            <person name="Terryn N."/>
            <person name="Hartley N."/>
            <person name="Bent E."/>
            <person name="Johnson S."/>
            <person name="Langham S.-A."/>
            <person name="McCullagh B."/>
            <person name="Robben J."/>
            <person name="Grymonprez B."/>
            <person name="Zimmermann W."/>
            <person name="Ramsperger U."/>
            <person name="Wedler H."/>
            <person name="Balke K."/>
            <person name="Wedler E."/>
            <person name="Peters S."/>
            <person name="van Staveren M."/>
            <person name="Dirkse W."/>
            <person name="Mooijman P."/>
            <person name="Klein Lankhorst R."/>
            <person name="Weitzenegger T."/>
            <person name="Bothe G."/>
            <person name="Rose M."/>
            <person name="Hauf J."/>
            <person name="Berneiser S."/>
            <person name="Hempel S."/>
            <person name="Feldpausch M."/>
            <person name="Lamberth S."/>
            <person name="Villarroel R."/>
            <person name="Gielen J."/>
            <person name="Ardiles W."/>
            <person name="Bents O."/>
            <person name="Lemcke K."/>
            <person name="Kolesov G."/>
            <person name="Mayer K.F.X."/>
            <person name="Rudd S."/>
            <person name="Schoof H."/>
            <person name="Schueller C."/>
            <person name="Zaccaria P."/>
            <person name="Mewes H.-W."/>
            <person name="Bevan M."/>
            <person name="Fransz P.F."/>
        </authorList>
    </citation>
    <scope>NUCLEOTIDE SEQUENCE [LARGE SCALE GENOMIC DNA]</scope>
    <source>
        <strain>cv. Columbia</strain>
    </source>
</reference>
<reference key="2">
    <citation type="journal article" date="1997" name="DNA Res.">
        <title>Structural analysis of Arabidopsis thaliana chromosome 5. I. Sequence features of the 1.6 Mb regions covered by twenty physically assigned P1 clones.</title>
        <authorList>
            <person name="Sato S."/>
            <person name="Kotani H."/>
            <person name="Nakamura Y."/>
            <person name="Kaneko T."/>
            <person name="Asamizu E."/>
            <person name="Fukami M."/>
            <person name="Miyajima N."/>
            <person name="Tabata S."/>
        </authorList>
    </citation>
    <scope>NUCLEOTIDE SEQUENCE [LARGE SCALE GENOMIC DNA] OF 380-634</scope>
    <source>
        <strain>cv. Columbia</strain>
    </source>
</reference>
<reference key="3">
    <citation type="journal article" date="2017" name="Plant J.">
        <title>Araport11: a complete reannotation of the Arabidopsis thaliana reference genome.</title>
        <authorList>
            <person name="Cheng C.Y."/>
            <person name="Krishnakumar V."/>
            <person name="Chan A.P."/>
            <person name="Thibaud-Nissen F."/>
            <person name="Schobel S."/>
            <person name="Town C.D."/>
        </authorList>
    </citation>
    <scope>GENOME REANNOTATION</scope>
    <source>
        <strain>cv. Columbia</strain>
    </source>
</reference>
<reference key="4">
    <citation type="journal article" date="2003" name="Science">
        <title>Empirical analysis of transcriptional activity in the Arabidopsis genome.</title>
        <authorList>
            <person name="Yamada K."/>
            <person name="Lim J."/>
            <person name="Dale J.M."/>
            <person name="Chen H."/>
            <person name="Shinn P."/>
            <person name="Palm C.J."/>
            <person name="Southwick A.M."/>
            <person name="Wu H.C."/>
            <person name="Kim C.J."/>
            <person name="Nguyen M."/>
            <person name="Pham P.K."/>
            <person name="Cheuk R.F."/>
            <person name="Karlin-Newmann G."/>
            <person name="Liu S.X."/>
            <person name="Lam B."/>
            <person name="Sakano H."/>
            <person name="Wu T."/>
            <person name="Yu G."/>
            <person name="Miranda M."/>
            <person name="Quach H.L."/>
            <person name="Tripp M."/>
            <person name="Chang C.H."/>
            <person name="Lee J.M."/>
            <person name="Toriumi M.J."/>
            <person name="Chan M.M."/>
            <person name="Tang C.C."/>
            <person name="Onodera C.S."/>
            <person name="Deng J.M."/>
            <person name="Akiyama K."/>
            <person name="Ansari Y."/>
            <person name="Arakawa T."/>
            <person name="Banh J."/>
            <person name="Banno F."/>
            <person name="Bowser L."/>
            <person name="Brooks S.Y."/>
            <person name="Carninci P."/>
            <person name="Chao Q."/>
            <person name="Choy N."/>
            <person name="Enju A."/>
            <person name="Goldsmith A.D."/>
            <person name="Gurjal M."/>
            <person name="Hansen N.F."/>
            <person name="Hayashizaki Y."/>
            <person name="Johnson-Hopson C."/>
            <person name="Hsuan V.W."/>
            <person name="Iida K."/>
            <person name="Karnes M."/>
            <person name="Khan S."/>
            <person name="Koesema E."/>
            <person name="Ishida J."/>
            <person name="Jiang P.X."/>
            <person name="Jones T."/>
            <person name="Kawai J."/>
            <person name="Kamiya A."/>
            <person name="Meyers C."/>
            <person name="Nakajima M."/>
            <person name="Narusaka M."/>
            <person name="Seki M."/>
            <person name="Sakurai T."/>
            <person name="Satou M."/>
            <person name="Tamse R."/>
            <person name="Vaysberg M."/>
            <person name="Wallender E.K."/>
            <person name="Wong C."/>
            <person name="Yamamura Y."/>
            <person name="Yuan S."/>
            <person name="Shinozaki K."/>
            <person name="Davis R.W."/>
            <person name="Theologis A."/>
            <person name="Ecker J.R."/>
        </authorList>
    </citation>
    <scope>NUCLEOTIDE SEQUENCE [LARGE SCALE MRNA]</scope>
    <source>
        <strain>cv. Columbia</strain>
    </source>
</reference>
<reference key="5">
    <citation type="submission" date="2005-03" db="EMBL/GenBank/DDBJ databases">
        <title>Large-scale analysis of RIKEN Arabidopsis full-length (RAFL) cDNAs.</title>
        <authorList>
            <person name="Totoki Y."/>
            <person name="Seki M."/>
            <person name="Ishida J."/>
            <person name="Nakajima M."/>
            <person name="Enju A."/>
            <person name="Kamiya A."/>
            <person name="Narusaka M."/>
            <person name="Shin-i T."/>
            <person name="Nakagawa M."/>
            <person name="Sakamoto N."/>
            <person name="Oishi K."/>
            <person name="Kohara Y."/>
            <person name="Kobayashi M."/>
            <person name="Toyoda A."/>
            <person name="Sakaki Y."/>
            <person name="Sakurai T."/>
            <person name="Iida K."/>
            <person name="Akiyama K."/>
            <person name="Satou M."/>
            <person name="Toyoda T."/>
            <person name="Konagaya A."/>
            <person name="Carninci P."/>
            <person name="Kawai J."/>
            <person name="Hayashizaki Y."/>
            <person name="Shinozaki K."/>
        </authorList>
    </citation>
    <scope>NUCLEOTIDE SEQUENCE [LARGE SCALE MRNA] OF 354-634</scope>
    <source>
        <strain>cv. Columbia</strain>
    </source>
</reference>
<reference key="6">
    <citation type="journal article" date="2001" name="J. Biol. Chem.">
        <title>The Arabidopsis thaliana ABC protein superfamily, a complete inventory.</title>
        <authorList>
            <person name="Sanchez-Fernandez R."/>
            <person name="Davies T.G."/>
            <person name="Coleman J.O."/>
            <person name="Rea P.A."/>
        </authorList>
    </citation>
    <scope>GENE FAMILY</scope>
    <scope>NOMENCLATURE</scope>
</reference>
<reference key="7">
    <citation type="journal article" date="2008" name="PLoS ONE">
        <title>Sorting signals, N-terminal modifications and abundance of the chloroplast proteome.</title>
        <authorList>
            <person name="Zybailov B."/>
            <person name="Rutschow H."/>
            <person name="Friso G."/>
            <person name="Rudella A."/>
            <person name="Emanuelsson O."/>
            <person name="Sun Q."/>
            <person name="van Wijk K.J."/>
        </authorList>
    </citation>
    <scope>IDENTIFICATION BY MASS SPECTROMETRY</scope>
    <scope>SUBCELLULAR LOCATION [LARGE SCALE ANALYSIS]</scope>
</reference>
<reference key="8">
    <citation type="journal article" date="2008" name="Trends Plant Sci.">
        <title>Plant ABC proteins - a unified nomenclature and updated inventory.</title>
        <authorList>
            <person name="Verrier P.J."/>
            <person name="Bird D."/>
            <person name="Burla B."/>
            <person name="Dassa E."/>
            <person name="Forestier C."/>
            <person name="Geisler M."/>
            <person name="Klein M."/>
            <person name="Kolukisaoglu H.U."/>
            <person name="Lee Y."/>
            <person name="Martinoia E."/>
            <person name="Murphy A."/>
            <person name="Rea P.A."/>
            <person name="Samuels L."/>
            <person name="Schulz B."/>
            <person name="Spalding E.J."/>
            <person name="Yazaki K."/>
            <person name="Theodoulou F.L."/>
        </authorList>
    </citation>
    <scope>GENE FAMILY</scope>
    <scope>NOMENCLATURE</scope>
</reference>